<comment type="catalytic activity">
    <reaction evidence="1">
        <text>5-dehydro-4-deoxy-D-glucarate + H(+) = 2,5-dioxopentanoate + CO2 + H2O</text>
        <dbReference type="Rhea" id="RHEA:24608"/>
        <dbReference type="ChEBI" id="CHEBI:15377"/>
        <dbReference type="ChEBI" id="CHEBI:15378"/>
        <dbReference type="ChEBI" id="CHEBI:16526"/>
        <dbReference type="ChEBI" id="CHEBI:42819"/>
        <dbReference type="ChEBI" id="CHEBI:58136"/>
        <dbReference type="EC" id="4.2.1.41"/>
    </reaction>
</comment>
<comment type="pathway">
    <text evidence="1">Carbohydrate acid metabolism; D-glucarate degradation; 2,5-dioxopentanoate from D-glucarate: step 2/2.</text>
</comment>
<comment type="similarity">
    <text evidence="1">Belongs to the DapA family.</text>
</comment>
<proteinExistence type="inferred from homology"/>
<keyword id="KW-0456">Lyase</keyword>
<accession>B9JLF7</accession>
<organism>
    <name type="scientific">Rhizobium rhizogenes (strain K84 / ATCC BAA-868)</name>
    <name type="common">Agrobacterium radiobacter</name>
    <dbReference type="NCBI Taxonomy" id="311403"/>
    <lineage>
        <taxon>Bacteria</taxon>
        <taxon>Pseudomonadati</taxon>
        <taxon>Pseudomonadota</taxon>
        <taxon>Alphaproteobacteria</taxon>
        <taxon>Hyphomicrobiales</taxon>
        <taxon>Rhizobiaceae</taxon>
        <taxon>Rhizobium/Agrobacterium group</taxon>
        <taxon>Rhizobium</taxon>
    </lineage>
</organism>
<feature type="chain" id="PRO_1000147904" description="Probable 5-dehydro-4-deoxyglucarate dehydratase">
    <location>
        <begin position="1"/>
        <end position="302"/>
    </location>
</feature>
<name>KDGD_RHIR8</name>
<evidence type="ECO:0000255" key="1">
    <source>
        <dbReference type="HAMAP-Rule" id="MF_00694"/>
    </source>
</evidence>
<protein>
    <recommendedName>
        <fullName evidence="1">Probable 5-dehydro-4-deoxyglucarate dehydratase</fullName>
        <ecNumber evidence="1">4.2.1.41</ecNumber>
    </recommendedName>
    <alternativeName>
        <fullName evidence="1">5-keto-4-deoxy-glucarate dehydratase</fullName>
        <shortName evidence="1">KDGDH</shortName>
    </alternativeName>
</protein>
<reference key="1">
    <citation type="journal article" date="2009" name="J. Bacteriol.">
        <title>Genome sequences of three Agrobacterium biovars help elucidate the evolution of multichromosome genomes in bacteria.</title>
        <authorList>
            <person name="Slater S.C."/>
            <person name="Goldman B.S."/>
            <person name="Goodner B."/>
            <person name="Setubal J.C."/>
            <person name="Farrand S.K."/>
            <person name="Nester E.W."/>
            <person name="Burr T.J."/>
            <person name="Banta L."/>
            <person name="Dickerman A.W."/>
            <person name="Paulsen I."/>
            <person name="Otten L."/>
            <person name="Suen G."/>
            <person name="Welch R."/>
            <person name="Almeida N.F."/>
            <person name="Arnold F."/>
            <person name="Burton O.T."/>
            <person name="Du Z."/>
            <person name="Ewing A."/>
            <person name="Godsy E."/>
            <person name="Heisel S."/>
            <person name="Houmiel K.L."/>
            <person name="Jhaveri J."/>
            <person name="Lu J."/>
            <person name="Miller N.M."/>
            <person name="Norton S."/>
            <person name="Chen Q."/>
            <person name="Phoolcharoen W."/>
            <person name="Ohlin V."/>
            <person name="Ondrusek D."/>
            <person name="Pride N."/>
            <person name="Stricklin S.L."/>
            <person name="Sun J."/>
            <person name="Wheeler C."/>
            <person name="Wilson L."/>
            <person name="Zhu H."/>
            <person name="Wood D.W."/>
        </authorList>
    </citation>
    <scope>NUCLEOTIDE SEQUENCE [LARGE SCALE GENOMIC DNA]</scope>
    <source>
        <strain>K84 / ATCC BAA-868</strain>
    </source>
</reference>
<dbReference type="EC" id="4.2.1.41" evidence="1"/>
<dbReference type="EMBL" id="CP000629">
    <property type="protein sequence ID" value="ACM30693.1"/>
    <property type="molecule type" value="Genomic_DNA"/>
</dbReference>
<dbReference type="SMR" id="B9JLF7"/>
<dbReference type="STRING" id="311403.Arad_9704"/>
<dbReference type="KEGG" id="ara:Arad_9704"/>
<dbReference type="eggNOG" id="COG0329">
    <property type="taxonomic scope" value="Bacteria"/>
</dbReference>
<dbReference type="HOGENOM" id="CLU_049343_5_2_5"/>
<dbReference type="UniPathway" id="UPA00564">
    <property type="reaction ID" value="UER00628"/>
</dbReference>
<dbReference type="Proteomes" id="UP000001600">
    <property type="component" value="Chromosome 2"/>
</dbReference>
<dbReference type="GO" id="GO:0008840">
    <property type="term" value="F:4-hydroxy-tetrahydrodipicolinate synthase activity"/>
    <property type="evidence" value="ECO:0007669"/>
    <property type="project" value="TreeGrafter"/>
</dbReference>
<dbReference type="GO" id="GO:0047448">
    <property type="term" value="F:5-dehydro-4-deoxyglucarate dehydratase activity"/>
    <property type="evidence" value="ECO:0007669"/>
    <property type="project" value="UniProtKB-UniRule"/>
</dbReference>
<dbReference type="GO" id="GO:0042838">
    <property type="term" value="P:D-glucarate catabolic process"/>
    <property type="evidence" value="ECO:0007669"/>
    <property type="project" value="UniProtKB-UniRule"/>
</dbReference>
<dbReference type="CDD" id="cd00951">
    <property type="entry name" value="KDGDH"/>
    <property type="match status" value="1"/>
</dbReference>
<dbReference type="Gene3D" id="3.20.20.70">
    <property type="entry name" value="Aldolase class I"/>
    <property type="match status" value="1"/>
</dbReference>
<dbReference type="HAMAP" id="MF_00694">
    <property type="entry name" value="KDGDH"/>
    <property type="match status" value="1"/>
</dbReference>
<dbReference type="InterPro" id="IPR013785">
    <property type="entry name" value="Aldolase_TIM"/>
</dbReference>
<dbReference type="InterPro" id="IPR002220">
    <property type="entry name" value="DapA-like"/>
</dbReference>
<dbReference type="InterPro" id="IPR017655">
    <property type="entry name" value="Dehydro-deoxyglucarate_dehyd"/>
</dbReference>
<dbReference type="NCBIfam" id="TIGR03249">
    <property type="entry name" value="KdgD"/>
    <property type="match status" value="1"/>
</dbReference>
<dbReference type="NCBIfam" id="NF002958">
    <property type="entry name" value="PRK03620.1"/>
    <property type="match status" value="1"/>
</dbReference>
<dbReference type="PANTHER" id="PTHR12128:SF19">
    <property type="entry name" value="5-DEHYDRO-4-DEOXYGLUCARATE DEHYDRATASE 2-RELATED"/>
    <property type="match status" value="1"/>
</dbReference>
<dbReference type="PANTHER" id="PTHR12128">
    <property type="entry name" value="DIHYDRODIPICOLINATE SYNTHASE"/>
    <property type="match status" value="1"/>
</dbReference>
<dbReference type="Pfam" id="PF00701">
    <property type="entry name" value="DHDPS"/>
    <property type="match status" value="1"/>
</dbReference>
<dbReference type="PIRSF" id="PIRSF001365">
    <property type="entry name" value="DHDPS"/>
    <property type="match status" value="1"/>
</dbReference>
<dbReference type="SMART" id="SM01130">
    <property type="entry name" value="DHDPS"/>
    <property type="match status" value="1"/>
</dbReference>
<dbReference type="SUPFAM" id="SSF51569">
    <property type="entry name" value="Aldolase"/>
    <property type="match status" value="1"/>
</dbReference>
<gene>
    <name type="ordered locus">Arad_9704</name>
</gene>
<sequence length="302" mass="32211">MNPLELKKAVGSGLLSFPVTHFDNDLKFDEAKYRRHVEWLSGYDAAALFAAGGTGEFFSLNPAEVPQVVQAAKAVAGNTPIISGTGYGTSIAVEIAKSAEKAGADGLLLLPPYLMFAEQEGLIAHVKAVCQSVGIGVIVYNRDNAILNADSIARLTDECPNLIGFKDGVGDVDKVIEITTKLQDRLVYVGGMPTHEVYAQAYFAAGVTTYSSAVFNFVPALAQRFYGALRTGDQATVDEILKGFFFPFVALRNRKKGYAVSIIKAGLRVLGQDPGPVRPPLTDLTPEELAALAQIIETAKAA</sequence>